<proteinExistence type="inferred from homology"/>
<accession>B1JV85</accession>
<reference key="1">
    <citation type="submission" date="2008-02" db="EMBL/GenBank/DDBJ databases">
        <title>Complete sequence of chromosome 1 of Burkholderia cenocepacia MC0-3.</title>
        <authorList>
            <person name="Copeland A."/>
            <person name="Lucas S."/>
            <person name="Lapidus A."/>
            <person name="Barry K."/>
            <person name="Bruce D."/>
            <person name="Goodwin L."/>
            <person name="Glavina del Rio T."/>
            <person name="Dalin E."/>
            <person name="Tice H."/>
            <person name="Pitluck S."/>
            <person name="Chain P."/>
            <person name="Malfatti S."/>
            <person name="Shin M."/>
            <person name="Vergez L."/>
            <person name="Schmutz J."/>
            <person name="Larimer F."/>
            <person name="Land M."/>
            <person name="Hauser L."/>
            <person name="Kyrpides N."/>
            <person name="Mikhailova N."/>
            <person name="Tiedje J."/>
            <person name="Richardson P."/>
        </authorList>
    </citation>
    <scope>NUCLEOTIDE SEQUENCE [LARGE SCALE GENOMIC DNA]</scope>
    <source>
        <strain>MC0-3</strain>
    </source>
</reference>
<gene>
    <name evidence="1" type="primary">lpxC</name>
    <name type="ordered locus">Bcenmc03_0537</name>
</gene>
<organism>
    <name type="scientific">Burkholderia orbicola (strain MC0-3)</name>
    <dbReference type="NCBI Taxonomy" id="406425"/>
    <lineage>
        <taxon>Bacteria</taxon>
        <taxon>Pseudomonadati</taxon>
        <taxon>Pseudomonadota</taxon>
        <taxon>Betaproteobacteria</taxon>
        <taxon>Burkholderiales</taxon>
        <taxon>Burkholderiaceae</taxon>
        <taxon>Burkholderia</taxon>
        <taxon>Burkholderia cepacia complex</taxon>
        <taxon>Burkholderia orbicola</taxon>
    </lineage>
</organism>
<feature type="chain" id="PRO_1000122766" description="UDP-3-O-acyl-N-acetylglucosamine deacetylase">
    <location>
        <begin position="1"/>
        <end position="305"/>
    </location>
</feature>
<feature type="active site" description="Proton donor" evidence="1">
    <location>
        <position position="264"/>
    </location>
</feature>
<feature type="binding site" evidence="1">
    <location>
        <position position="78"/>
    </location>
    <ligand>
        <name>Zn(2+)</name>
        <dbReference type="ChEBI" id="CHEBI:29105"/>
    </ligand>
</feature>
<feature type="binding site" evidence="1">
    <location>
        <position position="237"/>
    </location>
    <ligand>
        <name>Zn(2+)</name>
        <dbReference type="ChEBI" id="CHEBI:29105"/>
    </ligand>
</feature>
<feature type="binding site" evidence="1">
    <location>
        <position position="241"/>
    </location>
    <ligand>
        <name>Zn(2+)</name>
        <dbReference type="ChEBI" id="CHEBI:29105"/>
    </ligand>
</feature>
<name>LPXC_BURO0</name>
<keyword id="KW-0378">Hydrolase</keyword>
<keyword id="KW-0441">Lipid A biosynthesis</keyword>
<keyword id="KW-0444">Lipid biosynthesis</keyword>
<keyword id="KW-0443">Lipid metabolism</keyword>
<keyword id="KW-0479">Metal-binding</keyword>
<keyword id="KW-0862">Zinc</keyword>
<sequence>MLKQRTIKSIVKTVGIGVHSGRKIELTLRPAAPGTGIVFSRVDLPTPVDIPASAMSIGDTRLASVLQKDGVRVSTVEHLMSACAGLGIDNLYVDVTAEEIPIMDGSAATFVFLIQSAGIEEQNAPKRFIKVTKPVEIRDGDKFARLDPYFGFKLKFSIDFRHPAVDKTGQELEVDFATTSYVREIARARTFGFAHEAEMLREIGLARGGSMDNAIVLDEYRILNNDGLRYDDEFVKHKMLDAIGDLYVIGHPLLASYTAYKSGHGLNNALLRELLAHEDAYEIVTFDDPQAAPKGFAFDAQTAFA</sequence>
<protein>
    <recommendedName>
        <fullName evidence="1">UDP-3-O-acyl-N-acetylglucosamine deacetylase</fullName>
        <shortName evidence="1">UDP-3-O-acyl-GlcNAc deacetylase</shortName>
        <ecNumber evidence="1">3.5.1.108</ecNumber>
    </recommendedName>
    <alternativeName>
        <fullName evidence="1">UDP-3-O-[R-3-hydroxymyristoyl]-N-acetylglucosamine deacetylase</fullName>
    </alternativeName>
</protein>
<dbReference type="EC" id="3.5.1.108" evidence="1"/>
<dbReference type="EMBL" id="CP000958">
    <property type="protein sequence ID" value="ACA89715.1"/>
    <property type="molecule type" value="Genomic_DNA"/>
</dbReference>
<dbReference type="RefSeq" id="WP_011544505.1">
    <property type="nucleotide sequence ID" value="NC_010508.1"/>
</dbReference>
<dbReference type="SMR" id="B1JV85"/>
<dbReference type="GeneID" id="83047338"/>
<dbReference type="KEGG" id="bcm:Bcenmc03_0537"/>
<dbReference type="HOGENOM" id="CLU_046528_1_0_4"/>
<dbReference type="UniPathway" id="UPA00359">
    <property type="reaction ID" value="UER00478"/>
</dbReference>
<dbReference type="Proteomes" id="UP000002169">
    <property type="component" value="Chromosome 1"/>
</dbReference>
<dbReference type="GO" id="GO:0016020">
    <property type="term" value="C:membrane"/>
    <property type="evidence" value="ECO:0007669"/>
    <property type="project" value="GOC"/>
</dbReference>
<dbReference type="GO" id="GO:0046872">
    <property type="term" value="F:metal ion binding"/>
    <property type="evidence" value="ECO:0007669"/>
    <property type="project" value="UniProtKB-KW"/>
</dbReference>
<dbReference type="GO" id="GO:0103117">
    <property type="term" value="F:UDP-3-O-acyl-N-acetylglucosamine deacetylase activity"/>
    <property type="evidence" value="ECO:0007669"/>
    <property type="project" value="UniProtKB-UniRule"/>
</dbReference>
<dbReference type="GO" id="GO:0009245">
    <property type="term" value="P:lipid A biosynthetic process"/>
    <property type="evidence" value="ECO:0007669"/>
    <property type="project" value="UniProtKB-UniRule"/>
</dbReference>
<dbReference type="Gene3D" id="3.30.230.20">
    <property type="entry name" value="lpxc deacetylase, domain 1"/>
    <property type="match status" value="1"/>
</dbReference>
<dbReference type="Gene3D" id="3.30.1700.10">
    <property type="entry name" value="lpxc deacetylase, domain 2"/>
    <property type="match status" value="1"/>
</dbReference>
<dbReference type="HAMAP" id="MF_00388">
    <property type="entry name" value="LpxC"/>
    <property type="match status" value="1"/>
</dbReference>
<dbReference type="InterPro" id="IPR020568">
    <property type="entry name" value="Ribosomal_Su5_D2-typ_SF"/>
</dbReference>
<dbReference type="InterPro" id="IPR004463">
    <property type="entry name" value="UDP-acyl_GlcNac_deAcase"/>
</dbReference>
<dbReference type="InterPro" id="IPR011334">
    <property type="entry name" value="UDP-acyl_GlcNac_deAcase_C"/>
</dbReference>
<dbReference type="InterPro" id="IPR015870">
    <property type="entry name" value="UDP-acyl_N-AcGlcN_deAcase_N"/>
</dbReference>
<dbReference type="NCBIfam" id="TIGR00325">
    <property type="entry name" value="lpxC"/>
    <property type="match status" value="1"/>
</dbReference>
<dbReference type="PANTHER" id="PTHR33694">
    <property type="entry name" value="UDP-3-O-ACYL-N-ACETYLGLUCOSAMINE DEACETYLASE 1, MITOCHONDRIAL-RELATED"/>
    <property type="match status" value="1"/>
</dbReference>
<dbReference type="PANTHER" id="PTHR33694:SF1">
    <property type="entry name" value="UDP-3-O-ACYL-N-ACETYLGLUCOSAMINE DEACETYLASE 1, MITOCHONDRIAL-RELATED"/>
    <property type="match status" value="1"/>
</dbReference>
<dbReference type="Pfam" id="PF03331">
    <property type="entry name" value="LpxC"/>
    <property type="match status" value="1"/>
</dbReference>
<dbReference type="SUPFAM" id="SSF54211">
    <property type="entry name" value="Ribosomal protein S5 domain 2-like"/>
    <property type="match status" value="2"/>
</dbReference>
<evidence type="ECO:0000255" key="1">
    <source>
        <dbReference type="HAMAP-Rule" id="MF_00388"/>
    </source>
</evidence>
<comment type="function">
    <text evidence="1">Catalyzes the hydrolysis of UDP-3-O-myristoyl-N-acetylglucosamine to form UDP-3-O-myristoylglucosamine and acetate, the committed step in lipid A biosynthesis.</text>
</comment>
<comment type="catalytic activity">
    <reaction evidence="1">
        <text>a UDP-3-O-[(3R)-3-hydroxyacyl]-N-acetyl-alpha-D-glucosamine + H2O = a UDP-3-O-[(3R)-3-hydroxyacyl]-alpha-D-glucosamine + acetate</text>
        <dbReference type="Rhea" id="RHEA:67816"/>
        <dbReference type="ChEBI" id="CHEBI:15377"/>
        <dbReference type="ChEBI" id="CHEBI:30089"/>
        <dbReference type="ChEBI" id="CHEBI:137740"/>
        <dbReference type="ChEBI" id="CHEBI:173225"/>
        <dbReference type="EC" id="3.5.1.108"/>
    </reaction>
</comment>
<comment type="cofactor">
    <cofactor evidence="1">
        <name>Zn(2+)</name>
        <dbReference type="ChEBI" id="CHEBI:29105"/>
    </cofactor>
</comment>
<comment type="pathway">
    <text evidence="1">Glycolipid biosynthesis; lipid IV(A) biosynthesis; lipid IV(A) from (3R)-3-hydroxytetradecanoyl-[acyl-carrier-protein] and UDP-N-acetyl-alpha-D-glucosamine: step 2/6.</text>
</comment>
<comment type="similarity">
    <text evidence="1">Belongs to the LpxC family.</text>
</comment>